<reference key="1">
    <citation type="journal article" date="1995" name="Biochimie">
        <title>Cloning, sequencing, and characterizing the Lactobacillus leichmannii pyrC gene encoding dihydroorotase.</title>
        <authorList>
            <person name="Schenk-Groeninger R."/>
            <person name="Becker J."/>
            <person name="Brendel M."/>
        </authorList>
    </citation>
    <scope>NUCLEOTIDE SEQUENCE [GENOMIC DNA]</scope>
    <source>
        <strain>ATCC 4797 / DSM 20076 / BCRC 10699 / JCM 1148 / NBRC 3073 / NCIMB 7854 / 326 / F59</strain>
    </source>
</reference>
<accession>P48795</accession>
<sequence length="427" mass="46319">MAILLKNGLVYQEGEFIKEDVLISGSKIQAIGLDLPEEGAEVYDLKGKLLAPGLVDIHEHYREPGFTYKETIKTGSEAASRGGFTTVCTMPNVDPIPDDLETFEKQVALNEANSCVHLKQYGAITEDLTSDKVVDMAALKEAGAFAFSNDGHGIQQAGTMYEAMQEAAKVGLAICEHIQDDSLYHHGVMNAGKKAEELGLPGILGVSESAQLARDLVLAQATGVHYHACHVSTKESVELIRIAKEYGINVTAEATPHHLLLSEEEIDGNNGYYKMNPPLRSKEDQFALIEGMLDGTIDLIATDHAPHSREEKAGDMRKAAFGIIGNETAFACLYTKFVKSGQMDLSLLLDLMSYQPAKLFGLDAGVLAPGKEADLAVFDLDHAEKLSEEDYLSKGVNTPFTGQEVYGMTALTFVSGKLVYKSKHFAD</sequence>
<comment type="function">
    <text evidence="1">Catalyzes the reversible cyclization of carbamoyl aspartate to dihydroorotate.</text>
</comment>
<comment type="catalytic activity">
    <reaction evidence="1">
        <text>(S)-dihydroorotate + H2O = N-carbamoyl-L-aspartate + H(+)</text>
        <dbReference type="Rhea" id="RHEA:24296"/>
        <dbReference type="ChEBI" id="CHEBI:15377"/>
        <dbReference type="ChEBI" id="CHEBI:15378"/>
        <dbReference type="ChEBI" id="CHEBI:30864"/>
        <dbReference type="ChEBI" id="CHEBI:32814"/>
        <dbReference type="EC" id="3.5.2.3"/>
    </reaction>
</comment>
<comment type="cofactor">
    <cofactor evidence="1">
        <name>Zn(2+)</name>
        <dbReference type="ChEBI" id="CHEBI:29105"/>
    </cofactor>
    <text evidence="1">Binds 2 Zn(2+) ions per subunit.</text>
</comment>
<comment type="pathway">
    <text evidence="1">Pyrimidine metabolism; UMP biosynthesis via de novo pathway; (S)-dihydroorotate from bicarbonate: step 3/3.</text>
</comment>
<comment type="similarity">
    <text evidence="1">Belongs to the metallo-dependent hydrolases superfamily. DHOase family. Class I DHOase subfamily.</text>
</comment>
<feature type="chain" id="PRO_0000147236" description="Dihydroorotase">
    <location>
        <begin position="1"/>
        <end position="427"/>
    </location>
</feature>
<feature type="active site" evidence="1">
    <location>
        <position position="303"/>
    </location>
</feature>
<feature type="binding site" evidence="1">
    <location>
        <position position="58"/>
    </location>
    <ligand>
        <name>Zn(2+)</name>
        <dbReference type="ChEBI" id="CHEBI:29105"/>
        <label>1</label>
    </ligand>
</feature>
<feature type="binding site" evidence="1">
    <location>
        <begin position="60"/>
        <end position="62"/>
    </location>
    <ligand>
        <name>substrate</name>
    </ligand>
</feature>
<feature type="binding site" evidence="1">
    <location>
        <position position="60"/>
    </location>
    <ligand>
        <name>Zn(2+)</name>
        <dbReference type="ChEBI" id="CHEBI:29105"/>
        <label>1</label>
    </ligand>
</feature>
<feature type="binding site" evidence="1">
    <location>
        <position position="92"/>
    </location>
    <ligand>
        <name>substrate</name>
    </ligand>
</feature>
<feature type="binding site" evidence="1">
    <location>
        <position position="150"/>
    </location>
    <ligand>
        <name>Zn(2+)</name>
        <dbReference type="ChEBI" id="CHEBI:29105"/>
        <label>1</label>
    </ligand>
</feature>
<feature type="binding site" evidence="1">
    <location>
        <position position="150"/>
    </location>
    <ligand>
        <name>Zn(2+)</name>
        <dbReference type="ChEBI" id="CHEBI:29105"/>
        <label>2</label>
    </ligand>
</feature>
<feature type="binding site" evidence="1">
    <location>
        <position position="177"/>
    </location>
    <ligand>
        <name>Zn(2+)</name>
        <dbReference type="ChEBI" id="CHEBI:29105"/>
        <label>2</label>
    </ligand>
</feature>
<feature type="binding site" evidence="1">
    <location>
        <position position="230"/>
    </location>
    <ligand>
        <name>Zn(2+)</name>
        <dbReference type="ChEBI" id="CHEBI:29105"/>
        <label>2</label>
    </ligand>
</feature>
<feature type="binding site" evidence="1">
    <location>
        <position position="276"/>
    </location>
    <ligand>
        <name>substrate</name>
    </ligand>
</feature>
<feature type="binding site" evidence="1">
    <location>
        <position position="303"/>
    </location>
    <ligand>
        <name>Zn(2+)</name>
        <dbReference type="ChEBI" id="CHEBI:29105"/>
        <label>1</label>
    </ligand>
</feature>
<feature type="binding site" evidence="1">
    <location>
        <position position="307"/>
    </location>
    <ligand>
        <name>substrate</name>
    </ligand>
</feature>
<feature type="binding site" evidence="1">
    <location>
        <begin position="321"/>
        <end position="322"/>
    </location>
    <ligand>
        <name>substrate</name>
    </ligand>
</feature>
<dbReference type="EC" id="3.5.2.3" evidence="1"/>
<dbReference type="EMBL" id="X78999">
    <property type="protein sequence ID" value="CAA55633.1"/>
    <property type="molecule type" value="Genomic_DNA"/>
</dbReference>
<dbReference type="PIR" id="T46955">
    <property type="entry name" value="T46955"/>
</dbReference>
<dbReference type="RefSeq" id="WP_035184401.1">
    <property type="nucleotide sequence ID" value="NZ_QOCY01000014.1"/>
</dbReference>
<dbReference type="SMR" id="P48795"/>
<dbReference type="UniPathway" id="UPA00070">
    <property type="reaction ID" value="UER00117"/>
</dbReference>
<dbReference type="GO" id="GO:0005737">
    <property type="term" value="C:cytoplasm"/>
    <property type="evidence" value="ECO:0007669"/>
    <property type="project" value="TreeGrafter"/>
</dbReference>
<dbReference type="GO" id="GO:0004038">
    <property type="term" value="F:allantoinase activity"/>
    <property type="evidence" value="ECO:0007669"/>
    <property type="project" value="TreeGrafter"/>
</dbReference>
<dbReference type="GO" id="GO:0004151">
    <property type="term" value="F:dihydroorotase activity"/>
    <property type="evidence" value="ECO:0007669"/>
    <property type="project" value="UniProtKB-UniRule"/>
</dbReference>
<dbReference type="GO" id="GO:0008270">
    <property type="term" value="F:zinc ion binding"/>
    <property type="evidence" value="ECO:0007669"/>
    <property type="project" value="UniProtKB-UniRule"/>
</dbReference>
<dbReference type="GO" id="GO:0044205">
    <property type="term" value="P:'de novo' UMP biosynthetic process"/>
    <property type="evidence" value="ECO:0007669"/>
    <property type="project" value="UniProtKB-UniRule"/>
</dbReference>
<dbReference type="GO" id="GO:0006145">
    <property type="term" value="P:purine nucleobase catabolic process"/>
    <property type="evidence" value="ECO:0007669"/>
    <property type="project" value="TreeGrafter"/>
</dbReference>
<dbReference type="CDD" id="cd01317">
    <property type="entry name" value="DHOase_IIa"/>
    <property type="match status" value="1"/>
</dbReference>
<dbReference type="Gene3D" id="3.20.20.140">
    <property type="entry name" value="Metal-dependent hydrolases"/>
    <property type="match status" value="1"/>
</dbReference>
<dbReference type="Gene3D" id="2.30.40.10">
    <property type="entry name" value="Urease, subunit C, domain 1"/>
    <property type="match status" value="2"/>
</dbReference>
<dbReference type="HAMAP" id="MF_00220_B">
    <property type="entry name" value="PyrC_classI_B"/>
    <property type="match status" value="1"/>
</dbReference>
<dbReference type="InterPro" id="IPR006680">
    <property type="entry name" value="Amidohydro-rel"/>
</dbReference>
<dbReference type="InterPro" id="IPR004722">
    <property type="entry name" value="DHOase"/>
</dbReference>
<dbReference type="InterPro" id="IPR050138">
    <property type="entry name" value="DHOase/Allantoinase_Hydrolase"/>
</dbReference>
<dbReference type="InterPro" id="IPR002195">
    <property type="entry name" value="Dihydroorotase_CS"/>
</dbReference>
<dbReference type="InterPro" id="IPR011059">
    <property type="entry name" value="Metal-dep_hydrolase_composite"/>
</dbReference>
<dbReference type="InterPro" id="IPR032466">
    <property type="entry name" value="Metal_Hydrolase"/>
</dbReference>
<dbReference type="NCBIfam" id="NF006837">
    <property type="entry name" value="PRK09357.1-2"/>
    <property type="match status" value="1"/>
</dbReference>
<dbReference type="NCBIfam" id="TIGR00857">
    <property type="entry name" value="pyrC_multi"/>
    <property type="match status" value="1"/>
</dbReference>
<dbReference type="PANTHER" id="PTHR43668">
    <property type="entry name" value="ALLANTOINASE"/>
    <property type="match status" value="1"/>
</dbReference>
<dbReference type="PANTHER" id="PTHR43668:SF2">
    <property type="entry name" value="ALLANTOINASE"/>
    <property type="match status" value="1"/>
</dbReference>
<dbReference type="Pfam" id="PF01979">
    <property type="entry name" value="Amidohydro_1"/>
    <property type="match status" value="1"/>
</dbReference>
<dbReference type="SUPFAM" id="SSF51338">
    <property type="entry name" value="Composite domain of metallo-dependent hydrolases"/>
    <property type="match status" value="1"/>
</dbReference>
<dbReference type="SUPFAM" id="SSF51556">
    <property type="entry name" value="Metallo-dependent hydrolases"/>
    <property type="match status" value="1"/>
</dbReference>
<dbReference type="PROSITE" id="PS00483">
    <property type="entry name" value="DIHYDROOROTASE_2"/>
    <property type="match status" value="1"/>
</dbReference>
<name>PYRC_LACLE</name>
<gene>
    <name evidence="1" type="primary">pyrC</name>
</gene>
<proteinExistence type="inferred from homology"/>
<evidence type="ECO:0000255" key="1">
    <source>
        <dbReference type="HAMAP-Rule" id="MF_00220"/>
    </source>
</evidence>
<keyword id="KW-0378">Hydrolase</keyword>
<keyword id="KW-0479">Metal-binding</keyword>
<keyword id="KW-0665">Pyrimidine biosynthesis</keyword>
<keyword id="KW-0862">Zinc</keyword>
<protein>
    <recommendedName>
        <fullName evidence="1">Dihydroorotase</fullName>
        <shortName evidence="1">DHOase</shortName>
        <ecNumber evidence="1">3.5.2.3</ecNumber>
    </recommendedName>
</protein>
<organism>
    <name type="scientific">Lactobacillus leichmannii</name>
    <dbReference type="NCBI Taxonomy" id="28039"/>
    <lineage>
        <taxon>Bacteria</taxon>
        <taxon>Bacillati</taxon>
        <taxon>Bacillota</taxon>
        <taxon>Bacilli</taxon>
        <taxon>Lactobacillales</taxon>
        <taxon>Lactobacillaceae</taxon>
        <taxon>Lactobacillus</taxon>
    </lineage>
</organism>